<reference key="1">
    <citation type="journal article" date="2006" name="Nature">
        <title>The DNA sequence and biological annotation of human chromosome 1.</title>
        <authorList>
            <person name="Gregory S.G."/>
            <person name="Barlow K.F."/>
            <person name="McLay K.E."/>
            <person name="Kaul R."/>
            <person name="Swarbreck D."/>
            <person name="Dunham A."/>
            <person name="Scott C.E."/>
            <person name="Howe K.L."/>
            <person name="Woodfine K."/>
            <person name="Spencer C.C.A."/>
            <person name="Jones M.C."/>
            <person name="Gillson C."/>
            <person name="Searle S."/>
            <person name="Zhou Y."/>
            <person name="Kokocinski F."/>
            <person name="McDonald L."/>
            <person name="Evans R."/>
            <person name="Phillips K."/>
            <person name="Atkinson A."/>
            <person name="Cooper R."/>
            <person name="Jones C."/>
            <person name="Hall R.E."/>
            <person name="Andrews T.D."/>
            <person name="Lloyd C."/>
            <person name="Ainscough R."/>
            <person name="Almeida J.P."/>
            <person name="Ambrose K.D."/>
            <person name="Anderson F."/>
            <person name="Andrew R.W."/>
            <person name="Ashwell R.I.S."/>
            <person name="Aubin K."/>
            <person name="Babbage A.K."/>
            <person name="Bagguley C.L."/>
            <person name="Bailey J."/>
            <person name="Beasley H."/>
            <person name="Bethel G."/>
            <person name="Bird C.P."/>
            <person name="Bray-Allen S."/>
            <person name="Brown J.Y."/>
            <person name="Brown A.J."/>
            <person name="Buckley D."/>
            <person name="Burton J."/>
            <person name="Bye J."/>
            <person name="Carder C."/>
            <person name="Chapman J.C."/>
            <person name="Clark S.Y."/>
            <person name="Clarke G."/>
            <person name="Clee C."/>
            <person name="Cobley V."/>
            <person name="Collier R.E."/>
            <person name="Corby N."/>
            <person name="Coville G.J."/>
            <person name="Davies J."/>
            <person name="Deadman R."/>
            <person name="Dunn M."/>
            <person name="Earthrowl M."/>
            <person name="Ellington A.G."/>
            <person name="Errington H."/>
            <person name="Frankish A."/>
            <person name="Frankland J."/>
            <person name="French L."/>
            <person name="Garner P."/>
            <person name="Garnett J."/>
            <person name="Gay L."/>
            <person name="Ghori M.R.J."/>
            <person name="Gibson R."/>
            <person name="Gilby L.M."/>
            <person name="Gillett W."/>
            <person name="Glithero R.J."/>
            <person name="Grafham D.V."/>
            <person name="Griffiths C."/>
            <person name="Griffiths-Jones S."/>
            <person name="Grocock R."/>
            <person name="Hammond S."/>
            <person name="Harrison E.S.I."/>
            <person name="Hart E."/>
            <person name="Haugen E."/>
            <person name="Heath P.D."/>
            <person name="Holmes S."/>
            <person name="Holt K."/>
            <person name="Howden P.J."/>
            <person name="Hunt A.R."/>
            <person name="Hunt S.E."/>
            <person name="Hunter G."/>
            <person name="Isherwood J."/>
            <person name="James R."/>
            <person name="Johnson C."/>
            <person name="Johnson D."/>
            <person name="Joy A."/>
            <person name="Kay M."/>
            <person name="Kershaw J.K."/>
            <person name="Kibukawa M."/>
            <person name="Kimberley A.M."/>
            <person name="King A."/>
            <person name="Knights A.J."/>
            <person name="Lad H."/>
            <person name="Laird G."/>
            <person name="Lawlor S."/>
            <person name="Leongamornlert D.A."/>
            <person name="Lloyd D.M."/>
            <person name="Loveland J."/>
            <person name="Lovell J."/>
            <person name="Lush M.J."/>
            <person name="Lyne R."/>
            <person name="Martin S."/>
            <person name="Mashreghi-Mohammadi M."/>
            <person name="Matthews L."/>
            <person name="Matthews N.S.W."/>
            <person name="McLaren S."/>
            <person name="Milne S."/>
            <person name="Mistry S."/>
            <person name="Moore M.J.F."/>
            <person name="Nickerson T."/>
            <person name="O'Dell C.N."/>
            <person name="Oliver K."/>
            <person name="Palmeiri A."/>
            <person name="Palmer S.A."/>
            <person name="Parker A."/>
            <person name="Patel D."/>
            <person name="Pearce A.V."/>
            <person name="Peck A.I."/>
            <person name="Pelan S."/>
            <person name="Phelps K."/>
            <person name="Phillimore B.J."/>
            <person name="Plumb R."/>
            <person name="Rajan J."/>
            <person name="Raymond C."/>
            <person name="Rouse G."/>
            <person name="Saenphimmachak C."/>
            <person name="Sehra H.K."/>
            <person name="Sheridan E."/>
            <person name="Shownkeen R."/>
            <person name="Sims S."/>
            <person name="Skuce C.D."/>
            <person name="Smith M."/>
            <person name="Steward C."/>
            <person name="Subramanian S."/>
            <person name="Sycamore N."/>
            <person name="Tracey A."/>
            <person name="Tromans A."/>
            <person name="Van Helmond Z."/>
            <person name="Wall M."/>
            <person name="Wallis J.M."/>
            <person name="White S."/>
            <person name="Whitehead S.L."/>
            <person name="Wilkinson J.E."/>
            <person name="Willey D.L."/>
            <person name="Williams H."/>
            <person name="Wilming L."/>
            <person name="Wray P.W."/>
            <person name="Wu Z."/>
            <person name="Coulson A."/>
            <person name="Vaudin M."/>
            <person name="Sulston J.E."/>
            <person name="Durbin R.M."/>
            <person name="Hubbard T."/>
            <person name="Wooster R."/>
            <person name="Dunham I."/>
            <person name="Carter N.P."/>
            <person name="McVean G."/>
            <person name="Ross M.T."/>
            <person name="Harrow J."/>
            <person name="Olson M.V."/>
            <person name="Beck S."/>
            <person name="Rogers J."/>
            <person name="Bentley D.R."/>
        </authorList>
    </citation>
    <scope>NUCLEOTIDE SEQUENCE [LARGE SCALE GENOMIC DNA]</scope>
</reference>
<reference key="2">
    <citation type="journal article" date="2004" name="Nat. Genet.">
        <title>Complete sequencing and characterization of 21,243 full-length human cDNAs.</title>
        <authorList>
            <person name="Ota T."/>
            <person name="Suzuki Y."/>
            <person name="Nishikawa T."/>
            <person name="Otsuki T."/>
            <person name="Sugiyama T."/>
            <person name="Irie R."/>
            <person name="Wakamatsu A."/>
            <person name="Hayashi K."/>
            <person name="Sato H."/>
            <person name="Nagai K."/>
            <person name="Kimura K."/>
            <person name="Makita H."/>
            <person name="Sekine M."/>
            <person name="Obayashi M."/>
            <person name="Nishi T."/>
            <person name="Shibahara T."/>
            <person name="Tanaka T."/>
            <person name="Ishii S."/>
            <person name="Yamamoto J."/>
            <person name="Saito K."/>
            <person name="Kawai Y."/>
            <person name="Isono Y."/>
            <person name="Nakamura Y."/>
            <person name="Nagahari K."/>
            <person name="Murakami K."/>
            <person name="Yasuda T."/>
            <person name="Iwayanagi T."/>
            <person name="Wagatsuma M."/>
            <person name="Shiratori A."/>
            <person name="Sudo H."/>
            <person name="Hosoiri T."/>
            <person name="Kaku Y."/>
            <person name="Kodaira H."/>
            <person name="Kondo H."/>
            <person name="Sugawara M."/>
            <person name="Takahashi M."/>
            <person name="Kanda K."/>
            <person name="Yokoi T."/>
            <person name="Furuya T."/>
            <person name="Kikkawa E."/>
            <person name="Omura Y."/>
            <person name="Abe K."/>
            <person name="Kamihara K."/>
            <person name="Katsuta N."/>
            <person name="Sato K."/>
            <person name="Tanikawa M."/>
            <person name="Yamazaki M."/>
            <person name="Ninomiya K."/>
            <person name="Ishibashi T."/>
            <person name="Yamashita H."/>
            <person name="Murakawa K."/>
            <person name="Fujimori K."/>
            <person name="Tanai H."/>
            <person name="Kimata M."/>
            <person name="Watanabe M."/>
            <person name="Hiraoka S."/>
            <person name="Chiba Y."/>
            <person name="Ishida S."/>
            <person name="Ono Y."/>
            <person name="Takiguchi S."/>
            <person name="Watanabe S."/>
            <person name="Yosida M."/>
            <person name="Hotuta T."/>
            <person name="Kusano J."/>
            <person name="Kanehori K."/>
            <person name="Takahashi-Fujii A."/>
            <person name="Hara H."/>
            <person name="Tanase T.-O."/>
            <person name="Nomura Y."/>
            <person name="Togiya S."/>
            <person name="Komai F."/>
            <person name="Hara R."/>
            <person name="Takeuchi K."/>
            <person name="Arita M."/>
            <person name="Imose N."/>
            <person name="Musashino K."/>
            <person name="Yuuki H."/>
            <person name="Oshima A."/>
            <person name="Sasaki N."/>
            <person name="Aotsuka S."/>
            <person name="Yoshikawa Y."/>
            <person name="Matsunawa H."/>
            <person name="Ichihara T."/>
            <person name="Shiohata N."/>
            <person name="Sano S."/>
            <person name="Moriya S."/>
            <person name="Momiyama H."/>
            <person name="Satoh N."/>
            <person name="Takami S."/>
            <person name="Terashima Y."/>
            <person name="Suzuki O."/>
            <person name="Nakagawa S."/>
            <person name="Senoh A."/>
            <person name="Mizoguchi H."/>
            <person name="Goto Y."/>
            <person name="Shimizu F."/>
            <person name="Wakebe H."/>
            <person name="Hishigaki H."/>
            <person name="Watanabe T."/>
            <person name="Sugiyama A."/>
            <person name="Takemoto M."/>
            <person name="Kawakami B."/>
            <person name="Yamazaki M."/>
            <person name="Watanabe K."/>
            <person name="Kumagai A."/>
            <person name="Itakura S."/>
            <person name="Fukuzumi Y."/>
            <person name="Fujimori Y."/>
            <person name="Komiyama M."/>
            <person name="Tashiro H."/>
            <person name="Tanigami A."/>
            <person name="Fujiwara T."/>
            <person name="Ono T."/>
            <person name="Yamada K."/>
            <person name="Fujii Y."/>
            <person name="Ozaki K."/>
            <person name="Hirao M."/>
            <person name="Ohmori Y."/>
            <person name="Kawabata A."/>
            <person name="Hikiji T."/>
            <person name="Kobatake N."/>
            <person name="Inagaki H."/>
            <person name="Ikema Y."/>
            <person name="Okamoto S."/>
            <person name="Okitani R."/>
            <person name="Kawakami T."/>
            <person name="Noguchi S."/>
            <person name="Itoh T."/>
            <person name="Shigeta K."/>
            <person name="Senba T."/>
            <person name="Matsumura K."/>
            <person name="Nakajima Y."/>
            <person name="Mizuno T."/>
            <person name="Morinaga M."/>
            <person name="Sasaki M."/>
            <person name="Togashi T."/>
            <person name="Oyama M."/>
            <person name="Hata H."/>
            <person name="Watanabe M."/>
            <person name="Komatsu T."/>
            <person name="Mizushima-Sugano J."/>
            <person name="Satoh T."/>
            <person name="Shirai Y."/>
            <person name="Takahashi Y."/>
            <person name="Nakagawa K."/>
            <person name="Okumura K."/>
            <person name="Nagase T."/>
            <person name="Nomura N."/>
            <person name="Kikuchi H."/>
            <person name="Masuho Y."/>
            <person name="Yamashita R."/>
            <person name="Nakai K."/>
            <person name="Yada T."/>
            <person name="Nakamura Y."/>
            <person name="Ohara O."/>
            <person name="Isogai T."/>
            <person name="Sugano S."/>
        </authorList>
    </citation>
    <scope>NUCLEOTIDE SEQUENCE [LARGE SCALE MRNA] OF 937-1661</scope>
    <source>
        <tissue>Tongue</tissue>
    </source>
</reference>
<reference key="3">
    <citation type="journal article" date="2004" name="Genome Res.">
        <title>The status, quality, and expansion of the NIH full-length cDNA project: the Mammalian Gene Collection (MGC).</title>
        <authorList>
            <consortium name="The MGC Project Team"/>
        </authorList>
    </citation>
    <scope>NUCLEOTIDE SEQUENCE [LARGE SCALE MRNA] OF 1037-1661</scope>
</reference>
<feature type="chain" id="PRO_0000285105" description="Beta/gamma crystallin domain-containing protein 2">
    <location>
        <begin position="1"/>
        <end position="1661"/>
    </location>
</feature>
<feature type="domain" description="Beta/gamma crystallin 'Greek key' 1" evidence="1">
    <location>
        <begin position="986"/>
        <end position="1023"/>
    </location>
</feature>
<feature type="domain" description="Beta/gamma crystallin 'Greek key' 2" evidence="1">
    <location>
        <begin position="1024"/>
        <end position="1067"/>
    </location>
</feature>
<feature type="domain" description="Beta/gamma crystallin 'Greek key' 3" evidence="1">
    <location>
        <begin position="1073"/>
        <end position="1113"/>
    </location>
</feature>
<feature type="domain" description="Beta/gamma crystallin 'Greek key' 4" evidence="1">
    <location>
        <begin position="1114"/>
        <end position="1156"/>
    </location>
</feature>
<feature type="domain" description="Beta/gamma crystallin 'Greek key' 5" evidence="1">
    <location>
        <begin position="1168"/>
        <end position="1213"/>
    </location>
</feature>
<feature type="domain" description="Beta/gamma crystallin 'Greek key' 6" evidence="1">
    <location>
        <begin position="1214"/>
        <end position="1256"/>
    </location>
</feature>
<feature type="domain" description="Beta/gamma crystallin 'Greek key' 7" evidence="1">
    <location>
        <begin position="1262"/>
        <end position="1302"/>
    </location>
</feature>
<feature type="domain" description="Beta/gamma crystallin 'Greek key' 8" evidence="1">
    <location>
        <begin position="1303"/>
        <end position="1345"/>
    </location>
</feature>
<feature type="domain" description="Beta/gamma crystallin 'Greek key' 9" evidence="1">
    <location>
        <begin position="1356"/>
        <end position="1393"/>
    </location>
</feature>
<feature type="domain" description="Beta/gamma crystallin 'Greek key' 10" evidence="1">
    <location>
        <begin position="1394"/>
        <end position="1437"/>
    </location>
</feature>
<feature type="domain" description="Beta/gamma crystallin 'Greek key' 11" evidence="1">
    <location>
        <begin position="1443"/>
        <end position="1483"/>
    </location>
</feature>
<feature type="domain" description="Beta/gamma crystallin 'Greek key' 12" evidence="1">
    <location>
        <begin position="1484"/>
        <end position="1525"/>
    </location>
</feature>
<feature type="domain" description="Ricin B-type lectin" evidence="2">
    <location>
        <begin position="1569"/>
        <end position="1659"/>
    </location>
</feature>
<feature type="region of interest" description="Disordered" evidence="3">
    <location>
        <begin position="72"/>
        <end position="135"/>
    </location>
</feature>
<feature type="region of interest" description="Disordered" evidence="3">
    <location>
        <begin position="148"/>
        <end position="168"/>
    </location>
</feature>
<feature type="region of interest" description="Disordered" evidence="3">
    <location>
        <begin position="242"/>
        <end position="268"/>
    </location>
</feature>
<feature type="region of interest" description="Disordered" evidence="3">
    <location>
        <begin position="297"/>
        <end position="321"/>
    </location>
</feature>
<feature type="region of interest" description="Disordered" evidence="3">
    <location>
        <begin position="337"/>
        <end position="380"/>
    </location>
</feature>
<feature type="region of interest" description="Disordered" evidence="3">
    <location>
        <begin position="411"/>
        <end position="757"/>
    </location>
</feature>
<feature type="region of interest" description="Disordered" evidence="3">
    <location>
        <begin position="808"/>
        <end position="871"/>
    </location>
</feature>
<feature type="region of interest" description="Disordered" evidence="3">
    <location>
        <begin position="883"/>
        <end position="903"/>
    </location>
</feature>
<feature type="compositionally biased region" description="Basic and acidic residues" evidence="3">
    <location>
        <begin position="105"/>
        <end position="118"/>
    </location>
</feature>
<feature type="compositionally biased region" description="Polar residues" evidence="3">
    <location>
        <begin position="337"/>
        <end position="353"/>
    </location>
</feature>
<feature type="compositionally biased region" description="Low complexity" evidence="3">
    <location>
        <begin position="431"/>
        <end position="442"/>
    </location>
</feature>
<feature type="compositionally biased region" description="Polar residues" evidence="3">
    <location>
        <begin position="507"/>
        <end position="519"/>
    </location>
</feature>
<feature type="compositionally biased region" description="Polar residues" evidence="3">
    <location>
        <begin position="628"/>
        <end position="644"/>
    </location>
</feature>
<feature type="compositionally biased region" description="Polar residues" evidence="3">
    <location>
        <begin position="685"/>
        <end position="697"/>
    </location>
</feature>
<feature type="compositionally biased region" description="Low complexity" evidence="3">
    <location>
        <begin position="706"/>
        <end position="719"/>
    </location>
</feature>
<feature type="compositionally biased region" description="Polar residues" evidence="3">
    <location>
        <begin position="731"/>
        <end position="750"/>
    </location>
</feature>
<feature type="compositionally biased region" description="Acidic residues" evidence="3">
    <location>
        <begin position="825"/>
        <end position="835"/>
    </location>
</feature>
<feature type="compositionally biased region" description="Basic and acidic residues" evidence="3">
    <location>
        <begin position="841"/>
        <end position="851"/>
    </location>
</feature>
<feature type="sequence variant" id="VAR_048835" description="In dbSNP:rs10751735.">
    <original>S</original>
    <variation>N</variation>
    <location>
        <position position="1294"/>
    </location>
</feature>
<comment type="similarity">
    <text evidence="4">Belongs to the beta/gamma-crystallin family.</text>
</comment>
<comment type="sequence caution" evidence="4">
    <conflict type="erroneous initiation">
        <sequence resource="EMBL-CDS" id="AAI36871"/>
    </conflict>
    <text>Truncated N-terminus.</text>
</comment>
<comment type="sequence caution" evidence="4">
    <conflict type="erroneous initiation">
        <sequence resource="EMBL-CDS" id="BAC04533"/>
    </conflict>
    <text>Truncated N-terminus.</text>
</comment>
<accession>Q8N1P7</accession>
<accession>B2RNG3</accession>
<accession>Q5T137</accession>
<accession>Q5T150</accession>
<organism>
    <name type="scientific">Homo sapiens</name>
    <name type="common">Human</name>
    <dbReference type="NCBI Taxonomy" id="9606"/>
    <lineage>
        <taxon>Eukaryota</taxon>
        <taxon>Metazoa</taxon>
        <taxon>Chordata</taxon>
        <taxon>Craniata</taxon>
        <taxon>Vertebrata</taxon>
        <taxon>Euteleostomi</taxon>
        <taxon>Mammalia</taxon>
        <taxon>Eutheria</taxon>
        <taxon>Euarchontoglires</taxon>
        <taxon>Primates</taxon>
        <taxon>Haplorrhini</taxon>
        <taxon>Catarrhini</taxon>
        <taxon>Hominidae</taxon>
        <taxon>Homo</taxon>
    </lineage>
</organism>
<dbReference type="EMBL" id="AL451139">
    <property type="status" value="NOT_ANNOTATED_CDS"/>
    <property type="molecule type" value="Genomic_DNA"/>
</dbReference>
<dbReference type="EMBL" id="AK095339">
    <property type="protein sequence ID" value="BAC04533.1"/>
    <property type="status" value="ALT_INIT"/>
    <property type="molecule type" value="mRNA"/>
</dbReference>
<dbReference type="EMBL" id="BC136870">
    <property type="protein sequence ID" value="AAI36871.1"/>
    <property type="status" value="ALT_INIT"/>
    <property type="molecule type" value="mRNA"/>
</dbReference>
<dbReference type="RefSeq" id="NP_001034864.2">
    <property type="nucleotide sequence ID" value="NM_001039775.4"/>
</dbReference>
<dbReference type="RefSeq" id="XP_005245975.1">
    <property type="nucleotide sequence ID" value="XM_005245918.3"/>
</dbReference>
<dbReference type="SMR" id="Q8N1P7"/>
<dbReference type="BioGRID" id="120378">
    <property type="interactions" value="29"/>
</dbReference>
<dbReference type="FunCoup" id="Q8N1P7">
    <property type="interactions" value="37"/>
</dbReference>
<dbReference type="IntAct" id="Q8N1P7">
    <property type="interactions" value="27"/>
</dbReference>
<dbReference type="STRING" id="9606.ENSP00000428746"/>
<dbReference type="CAZy" id="CBM13">
    <property type="family name" value="Carbohydrate-Binding Module Family 13"/>
</dbReference>
<dbReference type="GlyGen" id="Q8N1P7">
    <property type="glycosylation" value="3 sites, 1 O-linked glycan (1 site)"/>
</dbReference>
<dbReference type="iPTMnet" id="Q8N1P7"/>
<dbReference type="PhosphoSitePlus" id="Q8N1P7"/>
<dbReference type="BioMuta" id="CRYBG2"/>
<dbReference type="DMDM" id="74750904"/>
<dbReference type="jPOST" id="Q8N1P7"/>
<dbReference type="MassIVE" id="Q8N1P7"/>
<dbReference type="PaxDb" id="9606-ENSP00000310435"/>
<dbReference type="PeptideAtlas" id="Q8N1P7"/>
<dbReference type="ProteomicsDB" id="71626"/>
<dbReference type="Pumba" id="Q8N1P7"/>
<dbReference type="Antibodypedia" id="30616">
    <property type="antibodies" value="108 antibodies from 18 providers"/>
</dbReference>
<dbReference type="DNASU" id="55057"/>
<dbReference type="Ensembl" id="ENST00000308182.10">
    <property type="protein sequence ID" value="ENSP00000310435.6"/>
    <property type="gene ID" value="ENSG00000176092.17"/>
</dbReference>
<dbReference type="GeneID" id="55057"/>
<dbReference type="KEGG" id="hsa:55057"/>
<dbReference type="MANE-Select" id="ENST00000308182.10">
    <property type="protein sequence ID" value="ENSP00000310435.6"/>
    <property type="RefSeq nucleotide sequence ID" value="NM_001039775.4"/>
    <property type="RefSeq protein sequence ID" value="NP_001034864.2"/>
</dbReference>
<dbReference type="UCSC" id="uc001bmd.4">
    <property type="organism name" value="human"/>
</dbReference>
<dbReference type="AGR" id="HGNC:17295"/>
<dbReference type="CTD" id="55057"/>
<dbReference type="DisGeNET" id="55057"/>
<dbReference type="GeneCards" id="CRYBG2"/>
<dbReference type="HGNC" id="HGNC:17295">
    <property type="gene designation" value="CRYBG2"/>
</dbReference>
<dbReference type="HPA" id="ENSG00000176092">
    <property type="expression patterns" value="Tissue enhanced (esophagus, skin, vagina)"/>
</dbReference>
<dbReference type="MIM" id="619765">
    <property type="type" value="gene"/>
</dbReference>
<dbReference type="neXtProt" id="NX_Q8N1P7"/>
<dbReference type="OpenTargets" id="ENSG00000176092"/>
<dbReference type="PharmGKB" id="PA24650"/>
<dbReference type="VEuPathDB" id="HostDB:ENSG00000176092"/>
<dbReference type="eggNOG" id="ENOG502R2J7">
    <property type="taxonomic scope" value="Eukaryota"/>
</dbReference>
<dbReference type="GeneTree" id="ENSGT00940000157740"/>
<dbReference type="HOGENOM" id="CLU_002147_0_1_1"/>
<dbReference type="InParanoid" id="Q8N1P7"/>
<dbReference type="OrthoDB" id="8823304at2759"/>
<dbReference type="PAN-GO" id="Q8N1P7">
    <property type="GO annotations" value="0 GO annotations based on evolutionary models"/>
</dbReference>
<dbReference type="PhylomeDB" id="Q8N1P7"/>
<dbReference type="PathwayCommons" id="Q8N1P7"/>
<dbReference type="BioGRID-ORCS" id="55057">
    <property type="hits" value="6 hits in 309 CRISPR screens"/>
</dbReference>
<dbReference type="ChiTaRS" id="AIM1L">
    <property type="organism name" value="human"/>
</dbReference>
<dbReference type="GenomeRNAi" id="55057"/>
<dbReference type="Pharos" id="Q8N1P7">
    <property type="development level" value="Tdark"/>
</dbReference>
<dbReference type="PRO" id="PR:Q8N1P7"/>
<dbReference type="Proteomes" id="UP000005640">
    <property type="component" value="Chromosome 1"/>
</dbReference>
<dbReference type="RNAct" id="Q8N1P7">
    <property type="molecule type" value="protein"/>
</dbReference>
<dbReference type="Bgee" id="ENSG00000176092">
    <property type="expression patterns" value="Expressed in lower esophagus mucosa and 162 other cell types or tissues"/>
</dbReference>
<dbReference type="ExpressionAtlas" id="Q8N1P7">
    <property type="expression patterns" value="baseline and differential"/>
</dbReference>
<dbReference type="GO" id="GO:0030246">
    <property type="term" value="F:carbohydrate binding"/>
    <property type="evidence" value="ECO:0007669"/>
    <property type="project" value="UniProtKB-KW"/>
</dbReference>
<dbReference type="CDD" id="cd23465">
    <property type="entry name" value="beta-trefoil_Ricin_CRYBG2"/>
    <property type="match status" value="1"/>
</dbReference>
<dbReference type="Gene3D" id="2.80.10.50">
    <property type="match status" value="1"/>
</dbReference>
<dbReference type="Gene3D" id="2.60.20.10">
    <property type="entry name" value="Crystallins"/>
    <property type="match status" value="6"/>
</dbReference>
<dbReference type="InterPro" id="IPR050252">
    <property type="entry name" value="Beta/Gamma-Crystallin"/>
</dbReference>
<dbReference type="InterPro" id="IPR001064">
    <property type="entry name" value="Beta/gamma_crystallin"/>
</dbReference>
<dbReference type="InterPro" id="IPR011024">
    <property type="entry name" value="G_crystallin-like"/>
</dbReference>
<dbReference type="InterPro" id="IPR035992">
    <property type="entry name" value="Ricin_B-like_lectins"/>
</dbReference>
<dbReference type="InterPro" id="IPR000772">
    <property type="entry name" value="Ricin_B_lectin"/>
</dbReference>
<dbReference type="PANTHER" id="PTHR11818">
    <property type="entry name" value="BETA/GAMMA CRYSTALLIN"/>
    <property type="match status" value="1"/>
</dbReference>
<dbReference type="PANTHER" id="PTHR11818:SF50">
    <property type="entry name" value="BETA_GAMMA CRYSTALLIN DOMAIN-CONTAINING PROTEIN 2"/>
    <property type="match status" value="1"/>
</dbReference>
<dbReference type="Pfam" id="PF00030">
    <property type="entry name" value="Crystall"/>
    <property type="match status" value="6"/>
</dbReference>
<dbReference type="Pfam" id="PF00652">
    <property type="entry name" value="Ricin_B_lectin"/>
    <property type="match status" value="1"/>
</dbReference>
<dbReference type="PRINTS" id="PR01367">
    <property type="entry name" value="BGCRYSTALLIN"/>
</dbReference>
<dbReference type="SMART" id="SM00458">
    <property type="entry name" value="RICIN"/>
    <property type="match status" value="1"/>
</dbReference>
<dbReference type="SMART" id="SM00247">
    <property type="entry name" value="XTALbg"/>
    <property type="match status" value="6"/>
</dbReference>
<dbReference type="SUPFAM" id="SSF49695">
    <property type="entry name" value="gamma-Crystallin-like"/>
    <property type="match status" value="3"/>
</dbReference>
<dbReference type="SUPFAM" id="SSF50370">
    <property type="entry name" value="Ricin B-like lectins"/>
    <property type="match status" value="1"/>
</dbReference>
<dbReference type="PROSITE" id="PS50915">
    <property type="entry name" value="CRYSTALLIN_BETA_GAMMA"/>
    <property type="match status" value="12"/>
</dbReference>
<dbReference type="PROSITE" id="PS50231">
    <property type="entry name" value="RICIN_B_LECTIN"/>
    <property type="match status" value="1"/>
</dbReference>
<keyword id="KW-0430">Lectin</keyword>
<keyword id="KW-1267">Proteomics identification</keyword>
<keyword id="KW-1185">Reference proteome</keyword>
<keyword id="KW-0677">Repeat</keyword>
<evidence type="ECO:0000255" key="1">
    <source>
        <dbReference type="PROSITE-ProRule" id="PRU00028"/>
    </source>
</evidence>
<evidence type="ECO:0000255" key="2">
    <source>
        <dbReference type="PROSITE-ProRule" id="PRU00174"/>
    </source>
</evidence>
<evidence type="ECO:0000256" key="3">
    <source>
        <dbReference type="SAM" id="MobiDB-lite"/>
    </source>
</evidence>
<evidence type="ECO:0000305" key="4"/>
<evidence type="ECO:0000312" key="5">
    <source>
        <dbReference type="HGNC" id="HGNC:17295"/>
    </source>
</evidence>
<proteinExistence type="evidence at protein level"/>
<name>CRBG2_HUMAN</name>
<sequence>MEEAGGPMARAKARVVSATLTWRQRPPTQEEIKHGFHKVSLVSGAQMEAPQKEMFEFSRREEVEVNGFATQEEETVNCQGPRDTAGSKNFQSHGPIFSKKYIPPPKEKRPEGRLKEAVDQSDGSRQAPRTEPPCVGAMARTELLVPLPGPREPSPHPGVGLTSGSSRSLEEYRVTRTVRTTTVVGGHVDRRMSSSVTVRPVSSGEALPRGRQVSRMVPPVVVGSPPGSPSRSQAVKVLSNLVPAGHSPPASHLPRPTAGGPRSTGLGSTVGAALRQLPETGTAELKDSSALASTGIPASAHLPKNQDAPAACPDRDQGRAPDARACELWQVLGAPSSTELPLQTSQGQASVPSSPRLETHVPSPGLTHPAKQPVVPTHPGARLTPLVLPPKKKDGPVDPPAATVLPMVRSEHVTVPGQPPAPSTTRRKDVPSPGGLSAPSSPRNKFVQNSENVPVLPFTQREVVKGPGAPAASSPTRKEVVQGSSASAASSPTWKEVVKGPGAPAASSPTQKEVVQGSSAPAALFPTWKEVVKGPGAPDASFPTWKEVVKGPGAPAASSPTQKEVVQGSGAPAALSTTPKEVVKGPGAPAASSPTQKEVVKGPCAPAASSPTQKEVVQGSGAPAALSPKSTEVVQGPKGSSSIQKEAVQGIAGSLAPPLTKEETVQGPIAPATSLPKQDKGVQDSEGSPISSLTQKEVVQDPDALPAPSSSVDRVSPSPGGTPAPVPTGAEASTESQLVSDPTEGKTCTETSREEDEVALAADLEIFLDTLRSMEPPEILRTHRLPRAPRSSYLSMYATLPAIEEDQLGPWVLGPGPQEVPSLEEKEEEEEEEPENPYLSDDEKLQRRQEKAGPSPSRDLHPARPTQVSCSPLEMMKKHVAGTKGPHSELGLELQGGSRPTSRLGGSLLFGSLVPTAKEASTPEPLGTKLSALLPHGAPGLRKVPGQLPLLCSERSSPTEKLACSLPLEGWSPALKTQGKLNTRPGKVIFFSESGCQGSGREVWGDIVDASGWAPVASIRVVRGCWVLYEEPEFRGQKLVLPEGDMELRTPGTKWSPQGIGSLRRVVWDYSTPEISLFSEEGLKGEQVKLTEALKNSQGLEKPLQVASATVSAGLWLLYPKPLFEDTPYILEPGEYPTSEAWGTSDPSVGSLKPMRLGCPSVEKPGEPRAVVYEAPGFQGRSWEVSRDIYNLQQPEDSQSPHLASVGSLRVLGGCWVGYEKEGFRGHQYLLEEGEYPDWSHWGGYDELLTSLRVIRTDFGDPAVVLFEAMDFEGHGVEVSKALPDVELVQHGPSTQAIHVLSGVWVAYQEVGFSGEQYVLEKGVYRNCEDWGAGNSTLASLQPVLQVGEHDLHFVSKIQLFSRPDFLGDHFSFEDDQAALPASFRPQSCRVHGGSWILFDETNFEGDQHILSEGEFPTLTAMGCLASTVLGSLQKVSLHFSEPSIFLYGLECFEGKEIELSREVRSLQAEGFNNHVLSVRIKGGIWVLCEHSDFRGRQWLVGSCEITNWLTYSGTQRVGSLYPIKQRRVYFRLWNAALGGFLAVPDHVEDMKAGRVVVADPQAGGSCIWYYEDGLLKNQMAPTMSLQVIGPPSPGSKVVLWAESRLPRQTWSISESGHICSQMFEGQILDVKGGRGYDRDHVVLWEPDEDRASQIWTIHVL</sequence>
<protein>
    <recommendedName>
        <fullName evidence="5">Beta/gamma crystallin domain-containing protein 2</fullName>
    </recommendedName>
    <alternativeName>
        <fullName>Absent in melanoma 1-like protein</fullName>
    </alternativeName>
</protein>
<gene>
    <name evidence="5" type="primary">CRYBG2</name>
    <name type="synonym">AIM1L</name>
</gene>